<gene>
    <name evidence="2" type="primary">tuf</name>
    <name type="ordered locus">GWCH70_0109</name>
</gene>
<reference key="1">
    <citation type="submission" date="2009-06" db="EMBL/GenBank/DDBJ databases">
        <title>Complete sequence of chromosome of Geopacillus sp. WCH70.</title>
        <authorList>
            <consortium name="US DOE Joint Genome Institute"/>
            <person name="Lucas S."/>
            <person name="Copeland A."/>
            <person name="Lapidus A."/>
            <person name="Glavina del Rio T."/>
            <person name="Dalin E."/>
            <person name="Tice H."/>
            <person name="Bruce D."/>
            <person name="Goodwin L."/>
            <person name="Pitluck S."/>
            <person name="Chertkov O."/>
            <person name="Brettin T."/>
            <person name="Detter J.C."/>
            <person name="Han C."/>
            <person name="Larimer F."/>
            <person name="Land M."/>
            <person name="Hauser L."/>
            <person name="Kyrpides N."/>
            <person name="Mikhailova N."/>
            <person name="Brumm P."/>
            <person name="Mead D.A."/>
            <person name="Richardson P."/>
        </authorList>
    </citation>
    <scope>NUCLEOTIDE SEQUENCE [LARGE SCALE GENOMIC DNA]</scope>
    <source>
        <strain>WCH70</strain>
    </source>
</reference>
<proteinExistence type="inferred from homology"/>
<comment type="function">
    <text evidence="2">GTP hydrolase that promotes the GTP-dependent binding of aminoacyl-tRNA to the A-site of ribosomes during protein biosynthesis.</text>
</comment>
<comment type="catalytic activity">
    <reaction evidence="2">
        <text>GTP + H2O = GDP + phosphate + H(+)</text>
        <dbReference type="Rhea" id="RHEA:19669"/>
        <dbReference type="ChEBI" id="CHEBI:15377"/>
        <dbReference type="ChEBI" id="CHEBI:15378"/>
        <dbReference type="ChEBI" id="CHEBI:37565"/>
        <dbReference type="ChEBI" id="CHEBI:43474"/>
        <dbReference type="ChEBI" id="CHEBI:58189"/>
        <dbReference type="EC" id="3.6.5.3"/>
    </reaction>
    <physiologicalReaction direction="left-to-right" evidence="2">
        <dbReference type="Rhea" id="RHEA:19670"/>
    </physiologicalReaction>
</comment>
<comment type="subunit">
    <text evidence="2">Monomer.</text>
</comment>
<comment type="subcellular location">
    <subcellularLocation>
        <location evidence="2">Cytoplasm</location>
    </subcellularLocation>
</comment>
<comment type="similarity">
    <text evidence="2">Belongs to the TRAFAC class translation factor GTPase superfamily. Classic translation factor GTPase family. EF-Tu/EF-1A subfamily.</text>
</comment>
<organism>
    <name type="scientific">Geobacillus sp. (strain WCH70)</name>
    <dbReference type="NCBI Taxonomy" id="471223"/>
    <lineage>
        <taxon>Bacteria</taxon>
        <taxon>Bacillati</taxon>
        <taxon>Bacillota</taxon>
        <taxon>Bacilli</taxon>
        <taxon>Bacillales</taxon>
        <taxon>Anoxybacillaceae</taxon>
        <taxon>Geobacillus</taxon>
    </lineage>
</organism>
<protein>
    <recommendedName>
        <fullName evidence="2">Elongation factor Tu</fullName>
        <shortName evidence="2">EF-Tu</shortName>
        <ecNumber evidence="2">3.6.5.3</ecNumber>
    </recommendedName>
</protein>
<keyword id="KW-0963">Cytoplasm</keyword>
<keyword id="KW-0251">Elongation factor</keyword>
<keyword id="KW-0342">GTP-binding</keyword>
<keyword id="KW-0378">Hydrolase</keyword>
<keyword id="KW-0460">Magnesium</keyword>
<keyword id="KW-0479">Metal-binding</keyword>
<keyword id="KW-0547">Nucleotide-binding</keyword>
<keyword id="KW-0648">Protein biosynthesis</keyword>
<accession>C5D3R5</accession>
<evidence type="ECO:0000250" key="1"/>
<evidence type="ECO:0000255" key="2">
    <source>
        <dbReference type="HAMAP-Rule" id="MF_00118"/>
    </source>
</evidence>
<dbReference type="EC" id="3.6.5.3" evidence="2"/>
<dbReference type="EMBL" id="CP001638">
    <property type="protein sequence ID" value="ACS23049.1"/>
    <property type="molecule type" value="Genomic_DNA"/>
</dbReference>
<dbReference type="SMR" id="C5D3R5"/>
<dbReference type="STRING" id="471223.GWCH70_0109"/>
<dbReference type="KEGG" id="gwc:GWCH70_0109"/>
<dbReference type="eggNOG" id="COG0050">
    <property type="taxonomic scope" value="Bacteria"/>
</dbReference>
<dbReference type="HOGENOM" id="CLU_007265_0_1_9"/>
<dbReference type="OrthoDB" id="9804504at2"/>
<dbReference type="GO" id="GO:0005829">
    <property type="term" value="C:cytosol"/>
    <property type="evidence" value="ECO:0007669"/>
    <property type="project" value="TreeGrafter"/>
</dbReference>
<dbReference type="GO" id="GO:0005525">
    <property type="term" value="F:GTP binding"/>
    <property type="evidence" value="ECO:0007669"/>
    <property type="project" value="UniProtKB-UniRule"/>
</dbReference>
<dbReference type="GO" id="GO:0003924">
    <property type="term" value="F:GTPase activity"/>
    <property type="evidence" value="ECO:0007669"/>
    <property type="project" value="InterPro"/>
</dbReference>
<dbReference type="GO" id="GO:0003746">
    <property type="term" value="F:translation elongation factor activity"/>
    <property type="evidence" value="ECO:0007669"/>
    <property type="project" value="UniProtKB-UniRule"/>
</dbReference>
<dbReference type="CDD" id="cd01884">
    <property type="entry name" value="EF_Tu"/>
    <property type="match status" value="1"/>
</dbReference>
<dbReference type="CDD" id="cd03697">
    <property type="entry name" value="EFTU_II"/>
    <property type="match status" value="1"/>
</dbReference>
<dbReference type="CDD" id="cd03707">
    <property type="entry name" value="EFTU_III"/>
    <property type="match status" value="1"/>
</dbReference>
<dbReference type="FunFam" id="2.40.30.10:FF:000001">
    <property type="entry name" value="Elongation factor Tu"/>
    <property type="match status" value="1"/>
</dbReference>
<dbReference type="FunFam" id="3.40.50.300:FF:000003">
    <property type="entry name" value="Elongation factor Tu"/>
    <property type="match status" value="1"/>
</dbReference>
<dbReference type="Gene3D" id="3.40.50.300">
    <property type="entry name" value="P-loop containing nucleotide triphosphate hydrolases"/>
    <property type="match status" value="1"/>
</dbReference>
<dbReference type="Gene3D" id="2.40.30.10">
    <property type="entry name" value="Translation factors"/>
    <property type="match status" value="2"/>
</dbReference>
<dbReference type="HAMAP" id="MF_00118_B">
    <property type="entry name" value="EF_Tu_B"/>
    <property type="match status" value="1"/>
</dbReference>
<dbReference type="InterPro" id="IPR041709">
    <property type="entry name" value="EF-Tu_GTP-bd"/>
</dbReference>
<dbReference type="InterPro" id="IPR050055">
    <property type="entry name" value="EF-Tu_GTPase"/>
</dbReference>
<dbReference type="InterPro" id="IPR004161">
    <property type="entry name" value="EFTu-like_2"/>
</dbReference>
<dbReference type="InterPro" id="IPR033720">
    <property type="entry name" value="EFTU_2"/>
</dbReference>
<dbReference type="InterPro" id="IPR031157">
    <property type="entry name" value="G_TR_CS"/>
</dbReference>
<dbReference type="InterPro" id="IPR027417">
    <property type="entry name" value="P-loop_NTPase"/>
</dbReference>
<dbReference type="InterPro" id="IPR005225">
    <property type="entry name" value="Small_GTP-bd"/>
</dbReference>
<dbReference type="InterPro" id="IPR000795">
    <property type="entry name" value="T_Tr_GTP-bd_dom"/>
</dbReference>
<dbReference type="InterPro" id="IPR009000">
    <property type="entry name" value="Transl_B-barrel_sf"/>
</dbReference>
<dbReference type="InterPro" id="IPR009001">
    <property type="entry name" value="Transl_elong_EF1A/Init_IF2_C"/>
</dbReference>
<dbReference type="InterPro" id="IPR004541">
    <property type="entry name" value="Transl_elong_EFTu/EF1A_bac/org"/>
</dbReference>
<dbReference type="InterPro" id="IPR004160">
    <property type="entry name" value="Transl_elong_EFTu/EF1A_C"/>
</dbReference>
<dbReference type="NCBIfam" id="TIGR00485">
    <property type="entry name" value="EF-Tu"/>
    <property type="match status" value="1"/>
</dbReference>
<dbReference type="NCBIfam" id="NF000766">
    <property type="entry name" value="PRK00049.1"/>
    <property type="match status" value="1"/>
</dbReference>
<dbReference type="NCBIfam" id="NF009372">
    <property type="entry name" value="PRK12735.1"/>
    <property type="match status" value="1"/>
</dbReference>
<dbReference type="NCBIfam" id="NF009373">
    <property type="entry name" value="PRK12736.1"/>
    <property type="match status" value="1"/>
</dbReference>
<dbReference type="NCBIfam" id="TIGR00231">
    <property type="entry name" value="small_GTP"/>
    <property type="match status" value="1"/>
</dbReference>
<dbReference type="PANTHER" id="PTHR43721:SF22">
    <property type="entry name" value="ELONGATION FACTOR TU, MITOCHONDRIAL"/>
    <property type="match status" value="1"/>
</dbReference>
<dbReference type="PANTHER" id="PTHR43721">
    <property type="entry name" value="ELONGATION FACTOR TU-RELATED"/>
    <property type="match status" value="1"/>
</dbReference>
<dbReference type="Pfam" id="PF00009">
    <property type="entry name" value="GTP_EFTU"/>
    <property type="match status" value="1"/>
</dbReference>
<dbReference type="Pfam" id="PF03144">
    <property type="entry name" value="GTP_EFTU_D2"/>
    <property type="match status" value="1"/>
</dbReference>
<dbReference type="Pfam" id="PF03143">
    <property type="entry name" value="GTP_EFTU_D3"/>
    <property type="match status" value="1"/>
</dbReference>
<dbReference type="PRINTS" id="PR00315">
    <property type="entry name" value="ELONGATNFCT"/>
</dbReference>
<dbReference type="SUPFAM" id="SSF50465">
    <property type="entry name" value="EF-Tu/eEF-1alpha/eIF2-gamma C-terminal domain"/>
    <property type="match status" value="1"/>
</dbReference>
<dbReference type="SUPFAM" id="SSF52540">
    <property type="entry name" value="P-loop containing nucleoside triphosphate hydrolases"/>
    <property type="match status" value="1"/>
</dbReference>
<dbReference type="SUPFAM" id="SSF50447">
    <property type="entry name" value="Translation proteins"/>
    <property type="match status" value="1"/>
</dbReference>
<dbReference type="PROSITE" id="PS00301">
    <property type="entry name" value="G_TR_1"/>
    <property type="match status" value="1"/>
</dbReference>
<dbReference type="PROSITE" id="PS51722">
    <property type="entry name" value="G_TR_2"/>
    <property type="match status" value="1"/>
</dbReference>
<feature type="chain" id="PRO_1000203012" description="Elongation factor Tu">
    <location>
        <begin position="1"/>
        <end position="395"/>
    </location>
</feature>
<feature type="domain" description="tr-type G">
    <location>
        <begin position="10"/>
        <end position="204"/>
    </location>
</feature>
<feature type="region of interest" description="G1" evidence="1">
    <location>
        <begin position="19"/>
        <end position="26"/>
    </location>
</feature>
<feature type="region of interest" description="G2" evidence="1">
    <location>
        <begin position="60"/>
        <end position="64"/>
    </location>
</feature>
<feature type="region of interest" description="G3" evidence="1">
    <location>
        <begin position="81"/>
        <end position="84"/>
    </location>
</feature>
<feature type="region of interest" description="G4" evidence="1">
    <location>
        <begin position="136"/>
        <end position="139"/>
    </location>
</feature>
<feature type="region of interest" description="G5" evidence="1">
    <location>
        <begin position="174"/>
        <end position="176"/>
    </location>
</feature>
<feature type="binding site" evidence="2">
    <location>
        <begin position="19"/>
        <end position="26"/>
    </location>
    <ligand>
        <name>GTP</name>
        <dbReference type="ChEBI" id="CHEBI:37565"/>
    </ligand>
</feature>
<feature type="binding site" evidence="2">
    <location>
        <position position="26"/>
    </location>
    <ligand>
        <name>Mg(2+)</name>
        <dbReference type="ChEBI" id="CHEBI:18420"/>
    </ligand>
</feature>
<feature type="binding site" evidence="2">
    <location>
        <begin position="81"/>
        <end position="85"/>
    </location>
    <ligand>
        <name>GTP</name>
        <dbReference type="ChEBI" id="CHEBI:37565"/>
    </ligand>
</feature>
<feature type="binding site" evidence="2">
    <location>
        <begin position="136"/>
        <end position="139"/>
    </location>
    <ligand>
        <name>GTP</name>
        <dbReference type="ChEBI" id="CHEBI:37565"/>
    </ligand>
</feature>
<sequence length="395" mass="43391">MAKEKFERKKPHVNIGTIGHVDHGKTTLTAAITAVLAKQGKAQARAYDQIDAAPEERERGITISTSHVEYETDNRHYAHVDCPGHADYVKNMITGAAQMDGAILVVSAADGPMPQTREHILLSRQVGVPYIVVFLNKCDMVDDEELLELVEMEVRDLLSEYDFPGDEVPVIKGSALKALEGDPQWEEKIIELMNAVDEYIPTPQREIDKPFMMPIEDVFSITGRGTVATGRVERGTLKVGDAVEIVGLADEPKSTTVTGVEMFRKLLDQAEAGDNIGALLRGVSRDEVERGQVLAKPGSITPHTKFKAQVYVLTKEEGGRHTPFFSNYRPQFYFRTTDVTGIITLPEGVEMVMPGDNVEMTVELIAPIAIEEGTKFSIREGGRTVGAGSVSEIIE</sequence>
<name>EFTU_GEOSW</name>